<reference key="1">
    <citation type="submission" date="2007-05" db="EMBL/GenBank/DDBJ databases">
        <title>Complete sequence of Pseudomonas putida F1.</title>
        <authorList>
            <consortium name="US DOE Joint Genome Institute"/>
            <person name="Copeland A."/>
            <person name="Lucas S."/>
            <person name="Lapidus A."/>
            <person name="Barry K."/>
            <person name="Detter J.C."/>
            <person name="Glavina del Rio T."/>
            <person name="Hammon N."/>
            <person name="Israni S."/>
            <person name="Dalin E."/>
            <person name="Tice H."/>
            <person name="Pitluck S."/>
            <person name="Chain P."/>
            <person name="Malfatti S."/>
            <person name="Shin M."/>
            <person name="Vergez L."/>
            <person name="Schmutz J."/>
            <person name="Larimer F."/>
            <person name="Land M."/>
            <person name="Hauser L."/>
            <person name="Kyrpides N."/>
            <person name="Lykidis A."/>
            <person name="Parales R."/>
            <person name="Richardson P."/>
        </authorList>
    </citation>
    <scope>NUCLEOTIDE SEQUENCE [LARGE SCALE GENOMIC DNA]</scope>
    <source>
        <strain>ATCC 700007 / DSM 6899 / JCM 31910 / BCRC 17059 / LMG 24140 / F1</strain>
    </source>
</reference>
<dbReference type="EC" id="3.5.3.23" evidence="1"/>
<dbReference type="EMBL" id="CP000712">
    <property type="protein sequence ID" value="ABQ77596.1"/>
    <property type="molecule type" value="Genomic_DNA"/>
</dbReference>
<dbReference type="SMR" id="A5W0D6"/>
<dbReference type="KEGG" id="ppf:Pput_1438"/>
<dbReference type="eggNOG" id="COG3724">
    <property type="taxonomic scope" value="Bacteria"/>
</dbReference>
<dbReference type="HOGENOM" id="CLU_053835_0_0_6"/>
<dbReference type="UniPathway" id="UPA00185">
    <property type="reaction ID" value="UER00280"/>
</dbReference>
<dbReference type="GO" id="GO:0009015">
    <property type="term" value="F:N-succinylarginine dihydrolase activity"/>
    <property type="evidence" value="ECO:0007669"/>
    <property type="project" value="UniProtKB-UniRule"/>
</dbReference>
<dbReference type="GO" id="GO:0019544">
    <property type="term" value="P:arginine catabolic process to glutamate"/>
    <property type="evidence" value="ECO:0007669"/>
    <property type="project" value="UniProtKB-UniRule"/>
</dbReference>
<dbReference type="GO" id="GO:0019545">
    <property type="term" value="P:arginine catabolic process to succinate"/>
    <property type="evidence" value="ECO:0007669"/>
    <property type="project" value="UniProtKB-UniRule"/>
</dbReference>
<dbReference type="FunFam" id="3.75.10.20:FF:000001">
    <property type="entry name" value="N-succinylarginine dihydrolase"/>
    <property type="match status" value="1"/>
</dbReference>
<dbReference type="Gene3D" id="3.75.10.20">
    <property type="entry name" value="Succinylarginine dihydrolase"/>
    <property type="match status" value="1"/>
</dbReference>
<dbReference type="HAMAP" id="MF_01172">
    <property type="entry name" value="AstB"/>
    <property type="match status" value="1"/>
</dbReference>
<dbReference type="InterPro" id="IPR037031">
    <property type="entry name" value="AstB_sf"/>
</dbReference>
<dbReference type="InterPro" id="IPR007079">
    <property type="entry name" value="SuccinylArg_d-Hdrlase_AstB"/>
</dbReference>
<dbReference type="NCBIfam" id="TIGR03241">
    <property type="entry name" value="arg_catab_astB"/>
    <property type="match status" value="1"/>
</dbReference>
<dbReference type="NCBIfam" id="NF009789">
    <property type="entry name" value="PRK13281.1"/>
    <property type="match status" value="1"/>
</dbReference>
<dbReference type="PANTHER" id="PTHR30420">
    <property type="entry name" value="N-SUCCINYLARGININE DIHYDROLASE"/>
    <property type="match status" value="1"/>
</dbReference>
<dbReference type="PANTHER" id="PTHR30420:SF2">
    <property type="entry name" value="N-SUCCINYLARGININE DIHYDROLASE"/>
    <property type="match status" value="1"/>
</dbReference>
<dbReference type="Pfam" id="PF04996">
    <property type="entry name" value="AstB"/>
    <property type="match status" value="1"/>
</dbReference>
<dbReference type="SUPFAM" id="SSF55909">
    <property type="entry name" value="Pentein"/>
    <property type="match status" value="1"/>
</dbReference>
<gene>
    <name evidence="1" type="primary">astB</name>
    <name type="ordered locus">Pput_1438</name>
</gene>
<name>ASTB_PSEP1</name>
<comment type="function">
    <text evidence="1">Catalyzes the hydrolysis of N(2)-succinylarginine into N(2)-succinylornithine, ammonia and CO(2).</text>
</comment>
<comment type="catalytic activity">
    <reaction evidence="1">
        <text>N(2)-succinyl-L-arginine + 2 H2O + 2 H(+) = N(2)-succinyl-L-ornithine + 2 NH4(+) + CO2</text>
        <dbReference type="Rhea" id="RHEA:19533"/>
        <dbReference type="ChEBI" id="CHEBI:15377"/>
        <dbReference type="ChEBI" id="CHEBI:15378"/>
        <dbReference type="ChEBI" id="CHEBI:16526"/>
        <dbReference type="ChEBI" id="CHEBI:28938"/>
        <dbReference type="ChEBI" id="CHEBI:58241"/>
        <dbReference type="ChEBI" id="CHEBI:58514"/>
        <dbReference type="EC" id="3.5.3.23"/>
    </reaction>
</comment>
<comment type="pathway">
    <text evidence="1">Amino-acid degradation; L-arginine degradation via AST pathway; L-glutamate and succinate from L-arginine: step 2/5.</text>
</comment>
<comment type="subunit">
    <text evidence="1">Homodimer.</text>
</comment>
<comment type="similarity">
    <text evidence="1">Belongs to the succinylarginine dihydrolase family.</text>
</comment>
<keyword id="KW-0056">Arginine metabolism</keyword>
<keyword id="KW-0378">Hydrolase</keyword>
<protein>
    <recommendedName>
        <fullName evidence="1">N-succinylarginine dihydrolase</fullName>
        <ecNumber evidence="1">3.5.3.23</ecNumber>
    </recommendedName>
</protein>
<feature type="chain" id="PRO_1000065733" description="N-succinylarginine dihydrolase">
    <location>
        <begin position="1"/>
        <end position="449"/>
    </location>
</feature>
<feature type="region of interest" description="Disordered" evidence="2">
    <location>
        <begin position="23"/>
        <end position="43"/>
    </location>
</feature>
<feature type="compositionally biased region" description="Low complexity" evidence="2">
    <location>
        <begin position="27"/>
        <end position="37"/>
    </location>
</feature>
<feature type="active site" evidence="1">
    <location>
        <position position="174"/>
    </location>
</feature>
<feature type="active site" evidence="1">
    <location>
        <position position="250"/>
    </location>
</feature>
<feature type="active site" description="Nucleophile" evidence="1">
    <location>
        <position position="371"/>
    </location>
</feature>
<feature type="binding site" evidence="1">
    <location>
        <begin position="19"/>
        <end position="28"/>
    </location>
    <ligand>
        <name>substrate</name>
    </ligand>
</feature>
<feature type="binding site" evidence="1">
    <location>
        <position position="110"/>
    </location>
    <ligand>
        <name>substrate</name>
    </ligand>
</feature>
<feature type="binding site" evidence="1">
    <location>
        <begin position="137"/>
        <end position="138"/>
    </location>
    <ligand>
        <name>substrate</name>
    </ligand>
</feature>
<feature type="binding site" evidence="1">
    <location>
        <position position="214"/>
    </location>
    <ligand>
        <name>substrate</name>
    </ligand>
</feature>
<feature type="binding site" evidence="1">
    <location>
        <position position="252"/>
    </location>
    <ligand>
        <name>substrate</name>
    </ligand>
</feature>
<feature type="binding site" evidence="1">
    <location>
        <position position="365"/>
    </location>
    <ligand>
        <name>substrate</name>
    </ligand>
</feature>
<accession>A5W0D6</accession>
<sequence length="449" mass="48817">MKSYEVNFDGLVGPTHNYGGLSYGNVASQSNSQQASNPREAARQGLAKMKALADMGFKQGVLAPQERPDVAALRRLGFSGSDADVIQRAAREAMPLLVASCSASSMWVANAATVSPSADTADGRVHFTAANLNCKYHRSIEHPTTSRVLGAMFNNEKHFAHHAALPAVAQFGDEGAANHTRFCRAYGEAGVEFFVYGRSAFDSRYPAPQKYPARQTLEASQAVARLHGLSDDGVVYAQQNPAVIDQGVFHNDVISVGNGEVLFYHEEAFLETDAVLGQLRAKLASKGGNFQAICVPRAAVAVEDAVRSYLFNSQLLSRDDGSMLLVVPEECRNNERVWAYLGQLTSQGGPVKEVKVFDLKQSMQNGGGPACLRLRVALKEAELAAVNQGVIMTAPLYDTLLQWVDRHYRDRLGEADLADPQLLVECRTALDELTQILKLGSVYPFQRQP</sequence>
<proteinExistence type="inferred from homology"/>
<evidence type="ECO:0000255" key="1">
    <source>
        <dbReference type="HAMAP-Rule" id="MF_01172"/>
    </source>
</evidence>
<evidence type="ECO:0000256" key="2">
    <source>
        <dbReference type="SAM" id="MobiDB-lite"/>
    </source>
</evidence>
<organism>
    <name type="scientific">Pseudomonas putida (strain ATCC 700007 / DSM 6899 / JCM 31910 / BCRC 17059 / LMG 24140 / F1)</name>
    <dbReference type="NCBI Taxonomy" id="351746"/>
    <lineage>
        <taxon>Bacteria</taxon>
        <taxon>Pseudomonadati</taxon>
        <taxon>Pseudomonadota</taxon>
        <taxon>Gammaproteobacteria</taxon>
        <taxon>Pseudomonadales</taxon>
        <taxon>Pseudomonadaceae</taxon>
        <taxon>Pseudomonas</taxon>
    </lineage>
</organism>